<proteinExistence type="evidence at protein level"/>
<name>PA2HB_METNM</name>
<accession>P82950</accession>
<comment type="function">
    <text evidence="1">Snake venom phospholipase A2 homolog that lacks enzymatic activity, but has myotoxic and cytolytic activities.</text>
</comment>
<comment type="subunit">
    <text evidence="1">Homodimer.</text>
</comment>
<comment type="subcellular location">
    <subcellularLocation>
        <location>Secreted</location>
    </subcellularLocation>
</comment>
<comment type="tissue specificity">
    <text>Expressed by the venom gland.</text>
</comment>
<comment type="similarity">
    <text evidence="3">Belongs to the phospholipase A2 family. Group II subfamily. K49 sub-subfamily.</text>
</comment>
<comment type="caution">
    <text evidence="3">Does not bind calcium as one of the calcium-binding sites is lost (Asp-&gt;Lys in position 48, which corresponds to 'Lys-49' in the current nomenclature).</text>
</comment>
<protein>
    <recommendedName>
        <fullName>Basic phospholipase A2 homolog</fullName>
        <shortName>svPLA2 homolog</shortName>
    </recommendedName>
    <alternativeName>
        <fullName>Myotoxin II</fullName>
    </alternativeName>
</protein>
<organism>
    <name type="scientific">Metlapilcoatlus nummifer</name>
    <name type="common">Mexican jumping pitviper</name>
    <name type="synonym">Atropoides nummifer</name>
    <dbReference type="NCBI Taxonomy" id="3148373"/>
    <lineage>
        <taxon>Eukaryota</taxon>
        <taxon>Metazoa</taxon>
        <taxon>Chordata</taxon>
        <taxon>Craniata</taxon>
        <taxon>Vertebrata</taxon>
        <taxon>Euteleostomi</taxon>
        <taxon>Lepidosauria</taxon>
        <taxon>Squamata</taxon>
        <taxon>Bifurcata</taxon>
        <taxon>Unidentata</taxon>
        <taxon>Episquamata</taxon>
        <taxon>Toxicofera</taxon>
        <taxon>Serpentes</taxon>
        <taxon>Colubroidea</taxon>
        <taxon>Viperidae</taxon>
        <taxon>Crotalinae</taxon>
        <taxon>Metlapilcoatlus</taxon>
    </lineage>
</organism>
<dbReference type="PDB" id="2AOZ">
    <property type="method" value="X-ray"/>
    <property type="resolution" value="2.08 A"/>
    <property type="chains" value="A=1-121"/>
</dbReference>
<dbReference type="PDBsum" id="2AOZ"/>
<dbReference type="SMR" id="P82950"/>
<dbReference type="EvolutionaryTrace" id="P82950"/>
<dbReference type="GO" id="GO:0005576">
    <property type="term" value="C:extracellular region"/>
    <property type="evidence" value="ECO:0007669"/>
    <property type="project" value="UniProtKB-SubCell"/>
</dbReference>
<dbReference type="GO" id="GO:0005509">
    <property type="term" value="F:calcium ion binding"/>
    <property type="evidence" value="ECO:0007669"/>
    <property type="project" value="InterPro"/>
</dbReference>
<dbReference type="GO" id="GO:0047498">
    <property type="term" value="F:calcium-dependent phospholipase A2 activity"/>
    <property type="evidence" value="ECO:0007669"/>
    <property type="project" value="TreeGrafter"/>
</dbReference>
<dbReference type="GO" id="GO:0005543">
    <property type="term" value="F:phospholipid binding"/>
    <property type="evidence" value="ECO:0007669"/>
    <property type="project" value="TreeGrafter"/>
</dbReference>
<dbReference type="GO" id="GO:0090729">
    <property type="term" value="F:toxin activity"/>
    <property type="evidence" value="ECO:0007669"/>
    <property type="project" value="UniProtKB-KW"/>
</dbReference>
<dbReference type="GO" id="GO:0050482">
    <property type="term" value="P:arachidonate secretion"/>
    <property type="evidence" value="ECO:0007669"/>
    <property type="project" value="InterPro"/>
</dbReference>
<dbReference type="GO" id="GO:0031640">
    <property type="term" value="P:killing of cells of another organism"/>
    <property type="evidence" value="ECO:0007669"/>
    <property type="project" value="UniProtKB-KW"/>
</dbReference>
<dbReference type="GO" id="GO:0016042">
    <property type="term" value="P:lipid catabolic process"/>
    <property type="evidence" value="ECO:0007669"/>
    <property type="project" value="InterPro"/>
</dbReference>
<dbReference type="GO" id="GO:0042130">
    <property type="term" value="P:negative regulation of T cell proliferation"/>
    <property type="evidence" value="ECO:0007669"/>
    <property type="project" value="TreeGrafter"/>
</dbReference>
<dbReference type="GO" id="GO:0006644">
    <property type="term" value="P:phospholipid metabolic process"/>
    <property type="evidence" value="ECO:0007669"/>
    <property type="project" value="InterPro"/>
</dbReference>
<dbReference type="CDD" id="cd00125">
    <property type="entry name" value="PLA2c"/>
    <property type="match status" value="1"/>
</dbReference>
<dbReference type="FunFam" id="1.20.90.10:FF:000001">
    <property type="entry name" value="Basic phospholipase A2 homolog"/>
    <property type="match status" value="1"/>
</dbReference>
<dbReference type="Gene3D" id="1.20.90.10">
    <property type="entry name" value="Phospholipase A2 domain"/>
    <property type="match status" value="1"/>
</dbReference>
<dbReference type="InterPro" id="IPR001211">
    <property type="entry name" value="PLipase_A2"/>
</dbReference>
<dbReference type="InterPro" id="IPR016090">
    <property type="entry name" value="PLipase_A2_dom"/>
</dbReference>
<dbReference type="InterPro" id="IPR036444">
    <property type="entry name" value="PLipase_A2_dom_sf"/>
</dbReference>
<dbReference type="InterPro" id="IPR033113">
    <property type="entry name" value="PLipase_A2_His_AS"/>
</dbReference>
<dbReference type="PANTHER" id="PTHR11716">
    <property type="entry name" value="PHOSPHOLIPASE A2 FAMILY MEMBER"/>
    <property type="match status" value="1"/>
</dbReference>
<dbReference type="PANTHER" id="PTHR11716:SF9">
    <property type="entry name" value="PHOSPHOLIPASE A2, MEMBRANE ASSOCIATED"/>
    <property type="match status" value="1"/>
</dbReference>
<dbReference type="Pfam" id="PF00068">
    <property type="entry name" value="Phospholip_A2_1"/>
    <property type="match status" value="1"/>
</dbReference>
<dbReference type="PRINTS" id="PR00389">
    <property type="entry name" value="PHPHLIPASEA2"/>
</dbReference>
<dbReference type="SMART" id="SM00085">
    <property type="entry name" value="PA2c"/>
    <property type="match status" value="1"/>
</dbReference>
<dbReference type="SUPFAM" id="SSF48619">
    <property type="entry name" value="Phospholipase A2, PLA2"/>
    <property type="match status" value="1"/>
</dbReference>
<dbReference type="PROSITE" id="PS00118">
    <property type="entry name" value="PA2_HIS"/>
    <property type="match status" value="1"/>
</dbReference>
<reference key="1">
    <citation type="journal article" date="2002" name="Int. J. Biochem. Cell Biol.">
        <title>Structural characterization and phylogenetic relationships of myotoxin II from Atropoides (Bothrops) nummifer snake venom, a Lys49 phospholipase A(2) homologue.</title>
        <authorList>
            <person name="Angulo Y."/>
            <person name="Olamendi-Portugal T."/>
            <person name="Alape-Giron A."/>
            <person name="Possani L.D."/>
            <person name="Lomonte B."/>
        </authorList>
    </citation>
    <scope>PROTEIN SEQUENCE</scope>
    <scope>FUNCTION</scope>
    <scope>SUBUNIT</scope>
    <source>
        <tissue>Venom</tissue>
    </source>
</reference>
<reference key="2">
    <citation type="journal article" date="2006" name="Acta Crystallogr. F">
        <title>Structure of myotoxin II, a catalytically inactive Lys49 phospholipase A2 homologue from Atropoides nummifer venom.</title>
        <authorList>
            <person name="Murakami M.T."/>
            <person name="Melo C.C."/>
            <person name="Angulo Y."/>
            <person name="Lomonte B."/>
            <person name="Arni R.K."/>
        </authorList>
    </citation>
    <scope>X-RAY CRYSTALLOGRAPHY (2.08 ANGSTROMS)</scope>
    <scope>DISULFIDE BONDS</scope>
</reference>
<keyword id="KW-0002">3D-structure</keyword>
<keyword id="KW-0204">Cytolysis</keyword>
<keyword id="KW-0903">Direct protein sequencing</keyword>
<keyword id="KW-1015">Disulfide bond</keyword>
<keyword id="KW-0959">Myotoxin</keyword>
<keyword id="KW-0964">Secreted</keyword>
<keyword id="KW-0800">Toxin</keyword>
<feature type="chain" id="PRO_0000161608" description="Basic phospholipase A2 homolog">
    <location>
        <begin position="1"/>
        <end position="121"/>
    </location>
</feature>
<feature type="disulfide bond" evidence="2">
    <location>
        <begin position="26"/>
        <end position="115"/>
    </location>
</feature>
<feature type="disulfide bond" evidence="2">
    <location>
        <begin position="28"/>
        <end position="44"/>
    </location>
</feature>
<feature type="disulfide bond" evidence="2">
    <location>
        <begin position="43"/>
        <end position="95"/>
    </location>
</feature>
<feature type="disulfide bond" evidence="2">
    <location>
        <begin position="49"/>
        <end position="121"/>
    </location>
</feature>
<feature type="disulfide bond" evidence="2">
    <location>
        <begin position="50"/>
        <end position="88"/>
    </location>
</feature>
<feature type="disulfide bond" evidence="2">
    <location>
        <begin position="57"/>
        <end position="81"/>
    </location>
</feature>
<feature type="disulfide bond" evidence="2">
    <location>
        <begin position="75"/>
        <end position="86"/>
    </location>
</feature>
<feature type="helix" evidence="4">
    <location>
        <begin position="2"/>
        <end position="13"/>
    </location>
</feature>
<feature type="helix" evidence="4">
    <location>
        <begin position="17"/>
        <end position="21"/>
    </location>
</feature>
<feature type="turn" evidence="4">
    <location>
        <begin position="25"/>
        <end position="27"/>
    </location>
</feature>
<feature type="strand" evidence="4">
    <location>
        <begin position="28"/>
        <end position="31"/>
    </location>
</feature>
<feature type="helix" evidence="4">
    <location>
        <begin position="39"/>
        <end position="50"/>
    </location>
</feature>
<feature type="helix" evidence="4">
    <location>
        <begin position="51"/>
        <end position="53"/>
    </location>
</feature>
<feature type="turn" evidence="4">
    <location>
        <begin position="59"/>
        <end position="61"/>
    </location>
</feature>
<feature type="strand" evidence="4">
    <location>
        <begin position="66"/>
        <end position="68"/>
    </location>
</feature>
<feature type="strand" evidence="4">
    <location>
        <begin position="73"/>
        <end position="75"/>
    </location>
</feature>
<feature type="helix" evidence="4">
    <location>
        <begin position="80"/>
        <end position="98"/>
    </location>
</feature>
<feature type="turn" evidence="4">
    <location>
        <begin position="99"/>
        <end position="102"/>
    </location>
</feature>
<feature type="turn" evidence="4">
    <location>
        <begin position="105"/>
        <end position="107"/>
    </location>
</feature>
<feature type="helix" evidence="4">
    <location>
        <begin position="112"/>
        <end position="114"/>
    </location>
</feature>
<evidence type="ECO:0000269" key="1">
    <source>
    </source>
</evidence>
<evidence type="ECO:0000269" key="2">
    <source>
    </source>
</evidence>
<evidence type="ECO:0000305" key="3"/>
<evidence type="ECO:0007829" key="4">
    <source>
        <dbReference type="PDB" id="2AOZ"/>
    </source>
</evidence>
<sequence>NLYQLWKMILQETGKNAAPSYGFYGCNCGVGSRGKPKDATDRCCFVHKCCYKALTDCSPKTDSYSYSWKDKTIVCGKNNPCLKQECECDKAVAICLRDNLDTYNKNYKIYPKPLCKKADDC</sequence>